<accession>Q949M2</accession>
<organism>
    <name type="scientific">Brassica napus</name>
    <name type="common">Rape</name>
    <dbReference type="NCBI Taxonomy" id="3708"/>
    <lineage>
        <taxon>Eukaryota</taxon>
        <taxon>Viridiplantae</taxon>
        <taxon>Streptophyta</taxon>
        <taxon>Embryophyta</taxon>
        <taxon>Tracheophyta</taxon>
        <taxon>Spermatophyta</taxon>
        <taxon>Magnoliopsida</taxon>
        <taxon>eudicotyledons</taxon>
        <taxon>Gunneridae</taxon>
        <taxon>Pentapetalae</taxon>
        <taxon>rosids</taxon>
        <taxon>malvids</taxon>
        <taxon>Brassicales</taxon>
        <taxon>Brassicaceae</taxon>
        <taxon>Brassiceae</taxon>
        <taxon>Brassica</taxon>
    </lineage>
</organism>
<proteinExistence type="evidence at transcript level"/>
<reference key="1">
    <citation type="submission" date="2001-06" db="EMBL/GenBank/DDBJ databases">
        <authorList>
            <person name="McDonald F.S."/>
            <person name="White A.J."/>
            <person name="Elborough K.M."/>
            <person name="Slabas A.R."/>
        </authorList>
    </citation>
    <scope>NUCLEOTIDE SEQUENCE [MRNA]</scope>
    <source>
        <strain>cv. Jet neuf</strain>
        <tissue>Embryo</tissue>
    </source>
</reference>
<gene>
    <name type="primary">bkr4</name>
</gene>
<comment type="catalytic activity">
    <reaction>
        <text>a (3R)-hydroxyacyl-[ACP] + NADP(+) = a 3-oxoacyl-[ACP] + NADPH + H(+)</text>
        <dbReference type="Rhea" id="RHEA:17397"/>
        <dbReference type="Rhea" id="RHEA-COMP:9916"/>
        <dbReference type="Rhea" id="RHEA-COMP:9945"/>
        <dbReference type="ChEBI" id="CHEBI:15378"/>
        <dbReference type="ChEBI" id="CHEBI:57783"/>
        <dbReference type="ChEBI" id="CHEBI:58349"/>
        <dbReference type="ChEBI" id="CHEBI:78776"/>
        <dbReference type="ChEBI" id="CHEBI:78827"/>
        <dbReference type="EC" id="1.1.1.100"/>
    </reaction>
</comment>
<comment type="pathway">
    <text>Lipid metabolism; fatty acid biosynthesis.</text>
</comment>
<comment type="subunit">
    <text evidence="1">Homotetramer.</text>
</comment>
<comment type="subcellular location">
    <subcellularLocation>
        <location evidence="1">Plastid</location>
        <location evidence="1">Chloroplast</location>
    </subcellularLocation>
    <subcellularLocation>
        <location evidence="1">Plastid</location>
    </subcellularLocation>
    <text evidence="1">And non-photosynthetic plastids.</text>
</comment>
<comment type="similarity">
    <text evidence="3">Belongs to the short-chain dehydrogenases/reductases (SDR) family.</text>
</comment>
<protein>
    <recommendedName>
        <fullName>3-oxoacyl-[acyl-carrier-protein] reductase 4</fullName>
        <ecNumber>1.1.1.100</ecNumber>
    </recommendedName>
    <alternativeName>
        <fullName>3-ketoacyl-acyl carrier protein reductase 4</fullName>
    </alternativeName>
</protein>
<feature type="chain" id="PRO_0000054660" description="3-oxoacyl-[acyl-carrier-protein] reductase 4">
    <location>
        <begin position="1" status="less than"/>
        <end position="254"/>
    </location>
</feature>
<feature type="active site" description="Proton acceptor" evidence="2">
    <location>
        <position position="161"/>
    </location>
</feature>
<feature type="binding site" evidence="1">
    <location>
        <begin position="19"/>
        <end position="43"/>
    </location>
    <ligand>
        <name>NADP(+)</name>
        <dbReference type="ChEBI" id="CHEBI:58349"/>
    </ligand>
</feature>
<feature type="binding site" evidence="1">
    <location>
        <position position="148"/>
    </location>
    <ligand>
        <name>substrate</name>
    </ligand>
</feature>
<feature type="non-terminal residue">
    <location>
        <position position="1"/>
    </location>
</feature>
<keyword id="KW-0150">Chloroplast</keyword>
<keyword id="KW-0275">Fatty acid biosynthesis</keyword>
<keyword id="KW-0276">Fatty acid metabolism</keyword>
<keyword id="KW-0444">Lipid biosynthesis</keyword>
<keyword id="KW-0443">Lipid metabolism</keyword>
<keyword id="KW-0521">NADP</keyword>
<keyword id="KW-0560">Oxidoreductase</keyword>
<keyword id="KW-0934">Plastid</keyword>
<name>FABG4_BRANA</name>
<dbReference type="EC" id="1.1.1.100"/>
<dbReference type="EMBL" id="AJ243086">
    <property type="protein sequence ID" value="CAC41365.1"/>
    <property type="molecule type" value="mRNA"/>
</dbReference>
<dbReference type="SMR" id="Q949M2"/>
<dbReference type="UniPathway" id="UPA00094"/>
<dbReference type="GO" id="GO:0009507">
    <property type="term" value="C:chloroplast"/>
    <property type="evidence" value="ECO:0007669"/>
    <property type="project" value="UniProtKB-SubCell"/>
</dbReference>
<dbReference type="GO" id="GO:0004316">
    <property type="term" value="F:3-oxoacyl-[acyl-carrier-protein] reductase (NADPH) activity"/>
    <property type="evidence" value="ECO:0007669"/>
    <property type="project" value="UniProtKB-EC"/>
</dbReference>
<dbReference type="GO" id="GO:0051287">
    <property type="term" value="F:NAD binding"/>
    <property type="evidence" value="ECO:0007669"/>
    <property type="project" value="InterPro"/>
</dbReference>
<dbReference type="GO" id="GO:0006633">
    <property type="term" value="P:fatty acid biosynthetic process"/>
    <property type="evidence" value="ECO:0007669"/>
    <property type="project" value="UniProtKB-UniPathway"/>
</dbReference>
<dbReference type="CDD" id="cd05333">
    <property type="entry name" value="BKR_SDR_c"/>
    <property type="match status" value="1"/>
</dbReference>
<dbReference type="FunFam" id="3.40.50.720:FF:000194">
    <property type="entry name" value="3-oxoacyl-[acyl-carrier-protein] reductase, chloroplastic"/>
    <property type="match status" value="1"/>
</dbReference>
<dbReference type="Gene3D" id="3.40.50.720">
    <property type="entry name" value="NAD(P)-binding Rossmann-like Domain"/>
    <property type="match status" value="1"/>
</dbReference>
<dbReference type="InterPro" id="IPR011284">
    <property type="entry name" value="3oxo_ACP_reduc"/>
</dbReference>
<dbReference type="InterPro" id="IPR036291">
    <property type="entry name" value="NAD(P)-bd_dom_sf"/>
</dbReference>
<dbReference type="InterPro" id="IPR020904">
    <property type="entry name" value="Sc_DH/Rdtase_CS"/>
</dbReference>
<dbReference type="InterPro" id="IPR050259">
    <property type="entry name" value="SDR"/>
</dbReference>
<dbReference type="InterPro" id="IPR002347">
    <property type="entry name" value="SDR_fam"/>
</dbReference>
<dbReference type="NCBIfam" id="TIGR01830">
    <property type="entry name" value="3oxo_ACP_reduc"/>
    <property type="match status" value="1"/>
</dbReference>
<dbReference type="NCBIfam" id="NF005559">
    <property type="entry name" value="PRK07231.1"/>
    <property type="match status" value="1"/>
</dbReference>
<dbReference type="NCBIfam" id="NF009466">
    <property type="entry name" value="PRK12826.1-2"/>
    <property type="match status" value="1"/>
</dbReference>
<dbReference type="PANTHER" id="PTHR42879">
    <property type="entry name" value="3-OXOACYL-(ACYL-CARRIER-PROTEIN) REDUCTASE"/>
    <property type="match status" value="1"/>
</dbReference>
<dbReference type="PANTHER" id="PTHR42879:SF2">
    <property type="entry name" value="3-OXOACYL-[ACYL-CARRIER-PROTEIN] REDUCTASE FABG"/>
    <property type="match status" value="1"/>
</dbReference>
<dbReference type="Pfam" id="PF00106">
    <property type="entry name" value="adh_short"/>
    <property type="match status" value="1"/>
</dbReference>
<dbReference type="PRINTS" id="PR00081">
    <property type="entry name" value="GDHRDH"/>
</dbReference>
<dbReference type="PRINTS" id="PR00080">
    <property type="entry name" value="SDRFAMILY"/>
</dbReference>
<dbReference type="SMART" id="SM00822">
    <property type="entry name" value="PKS_KR"/>
    <property type="match status" value="1"/>
</dbReference>
<dbReference type="SUPFAM" id="SSF51735">
    <property type="entry name" value="NAD(P)-binding Rossmann-fold domains"/>
    <property type="match status" value="1"/>
</dbReference>
<dbReference type="PROSITE" id="PS00061">
    <property type="entry name" value="ADH_SHORT"/>
    <property type="match status" value="1"/>
</dbReference>
<sequence length="254" mass="26648">TTTEEEEAVPKVESPVVVVTGASRGIGKAIALSLGKAGCKVLVNYARSAKEAEEVSKQIEEYGGQAITFGGDVSKEADVDAMMKTAVDKWGTIDVVVNNAGDTLLIRMKKSQWDEVMDLNLTGVFLCSQAATKIMMKKRKGRIINIASVVGLIGNIGQANYAAAKAGVIGFSKTAAREGASRNINVNVVCPGFIASDMTAKLGEDMEKKILGTIPLGRYGQPEDVAGLVEFLALSPAASYITGQTFTIDGGIAI</sequence>
<evidence type="ECO:0000250" key="1"/>
<evidence type="ECO:0000255" key="2">
    <source>
        <dbReference type="PROSITE-ProRule" id="PRU10001"/>
    </source>
</evidence>
<evidence type="ECO:0000305" key="3"/>